<keyword id="KW-0963">Cytoplasm</keyword>
<keyword id="KW-0444">Lipid biosynthesis</keyword>
<keyword id="KW-0443">Lipid metabolism</keyword>
<keyword id="KW-0520">NAD</keyword>
<keyword id="KW-0521">NADP</keyword>
<keyword id="KW-0547">Nucleotide-binding</keyword>
<keyword id="KW-0560">Oxidoreductase</keyword>
<keyword id="KW-0594">Phospholipid biosynthesis</keyword>
<keyword id="KW-1208">Phospholipid metabolism</keyword>
<feature type="chain" id="PRO_1000080317" description="Glycerol-3-phosphate dehydrogenase [NAD(P)+]">
    <location>
        <begin position="1"/>
        <end position="339"/>
    </location>
</feature>
<feature type="active site" description="Proton acceptor" evidence="1">
    <location>
        <position position="194"/>
    </location>
</feature>
<feature type="binding site" evidence="1">
    <location>
        <position position="14"/>
    </location>
    <ligand>
        <name>NADPH</name>
        <dbReference type="ChEBI" id="CHEBI:57783"/>
    </ligand>
</feature>
<feature type="binding site" evidence="1">
    <location>
        <position position="15"/>
    </location>
    <ligand>
        <name>NADPH</name>
        <dbReference type="ChEBI" id="CHEBI:57783"/>
    </ligand>
</feature>
<feature type="binding site" evidence="1">
    <location>
        <position position="35"/>
    </location>
    <ligand>
        <name>NADPH</name>
        <dbReference type="ChEBI" id="CHEBI:57783"/>
    </ligand>
</feature>
<feature type="binding site" evidence="1">
    <location>
        <position position="109"/>
    </location>
    <ligand>
        <name>NADPH</name>
        <dbReference type="ChEBI" id="CHEBI:57783"/>
    </ligand>
</feature>
<feature type="binding site" evidence="1">
    <location>
        <position position="109"/>
    </location>
    <ligand>
        <name>sn-glycerol 3-phosphate</name>
        <dbReference type="ChEBI" id="CHEBI:57597"/>
    </ligand>
</feature>
<feature type="binding site" evidence="1">
    <location>
        <position position="138"/>
    </location>
    <ligand>
        <name>sn-glycerol 3-phosphate</name>
        <dbReference type="ChEBI" id="CHEBI:57597"/>
    </ligand>
</feature>
<feature type="binding site" evidence="1">
    <location>
        <position position="140"/>
    </location>
    <ligand>
        <name>sn-glycerol 3-phosphate</name>
        <dbReference type="ChEBI" id="CHEBI:57597"/>
    </ligand>
</feature>
<feature type="binding site" evidence="1">
    <location>
        <position position="142"/>
    </location>
    <ligand>
        <name>NADPH</name>
        <dbReference type="ChEBI" id="CHEBI:57783"/>
    </ligand>
</feature>
<feature type="binding site" evidence="1">
    <location>
        <position position="194"/>
    </location>
    <ligand>
        <name>sn-glycerol 3-phosphate</name>
        <dbReference type="ChEBI" id="CHEBI:57597"/>
    </ligand>
</feature>
<feature type="binding site" evidence="1">
    <location>
        <position position="247"/>
    </location>
    <ligand>
        <name>sn-glycerol 3-phosphate</name>
        <dbReference type="ChEBI" id="CHEBI:57597"/>
    </ligand>
</feature>
<feature type="binding site" evidence="1">
    <location>
        <position position="257"/>
    </location>
    <ligand>
        <name>sn-glycerol 3-phosphate</name>
        <dbReference type="ChEBI" id="CHEBI:57597"/>
    </ligand>
</feature>
<feature type="binding site" evidence="1">
    <location>
        <position position="258"/>
    </location>
    <ligand>
        <name>NADPH</name>
        <dbReference type="ChEBI" id="CHEBI:57783"/>
    </ligand>
</feature>
<feature type="binding site" evidence="1">
    <location>
        <position position="258"/>
    </location>
    <ligand>
        <name>sn-glycerol 3-phosphate</name>
        <dbReference type="ChEBI" id="CHEBI:57597"/>
    </ligand>
</feature>
<feature type="binding site" evidence="1">
    <location>
        <position position="259"/>
    </location>
    <ligand>
        <name>sn-glycerol 3-phosphate</name>
        <dbReference type="ChEBI" id="CHEBI:57597"/>
    </ligand>
</feature>
<feature type="binding site" evidence="1">
    <location>
        <position position="282"/>
    </location>
    <ligand>
        <name>NADPH</name>
        <dbReference type="ChEBI" id="CHEBI:57783"/>
    </ligand>
</feature>
<feature type="binding site" evidence="1">
    <location>
        <position position="284"/>
    </location>
    <ligand>
        <name>NADPH</name>
        <dbReference type="ChEBI" id="CHEBI:57783"/>
    </ligand>
</feature>
<accession>B0TLE9</accession>
<comment type="function">
    <text evidence="1">Catalyzes the reduction of the glycolytic intermediate dihydroxyacetone phosphate (DHAP) to sn-glycerol 3-phosphate (G3P), the key precursor for phospholipid synthesis.</text>
</comment>
<comment type="catalytic activity">
    <reaction evidence="1">
        <text>sn-glycerol 3-phosphate + NAD(+) = dihydroxyacetone phosphate + NADH + H(+)</text>
        <dbReference type="Rhea" id="RHEA:11092"/>
        <dbReference type="ChEBI" id="CHEBI:15378"/>
        <dbReference type="ChEBI" id="CHEBI:57540"/>
        <dbReference type="ChEBI" id="CHEBI:57597"/>
        <dbReference type="ChEBI" id="CHEBI:57642"/>
        <dbReference type="ChEBI" id="CHEBI:57945"/>
        <dbReference type="EC" id="1.1.1.94"/>
    </reaction>
    <physiologicalReaction direction="right-to-left" evidence="1">
        <dbReference type="Rhea" id="RHEA:11094"/>
    </physiologicalReaction>
</comment>
<comment type="catalytic activity">
    <reaction evidence="1">
        <text>sn-glycerol 3-phosphate + NADP(+) = dihydroxyacetone phosphate + NADPH + H(+)</text>
        <dbReference type="Rhea" id="RHEA:11096"/>
        <dbReference type="ChEBI" id="CHEBI:15378"/>
        <dbReference type="ChEBI" id="CHEBI:57597"/>
        <dbReference type="ChEBI" id="CHEBI:57642"/>
        <dbReference type="ChEBI" id="CHEBI:57783"/>
        <dbReference type="ChEBI" id="CHEBI:58349"/>
        <dbReference type="EC" id="1.1.1.94"/>
    </reaction>
    <physiologicalReaction direction="right-to-left" evidence="1">
        <dbReference type="Rhea" id="RHEA:11098"/>
    </physiologicalReaction>
</comment>
<comment type="pathway">
    <text evidence="1">Membrane lipid metabolism; glycerophospholipid metabolism.</text>
</comment>
<comment type="subcellular location">
    <subcellularLocation>
        <location evidence="1">Cytoplasm</location>
    </subcellularLocation>
</comment>
<comment type="similarity">
    <text evidence="1">Belongs to the NAD-dependent glycerol-3-phosphate dehydrogenase family.</text>
</comment>
<reference key="1">
    <citation type="submission" date="2008-01" db="EMBL/GenBank/DDBJ databases">
        <title>Complete sequence of Shewanella halifaxensis HAW-EB4.</title>
        <authorList>
            <consortium name="US DOE Joint Genome Institute"/>
            <person name="Copeland A."/>
            <person name="Lucas S."/>
            <person name="Lapidus A."/>
            <person name="Glavina del Rio T."/>
            <person name="Dalin E."/>
            <person name="Tice H."/>
            <person name="Bruce D."/>
            <person name="Goodwin L."/>
            <person name="Pitluck S."/>
            <person name="Sims D."/>
            <person name="Brettin T."/>
            <person name="Detter J.C."/>
            <person name="Han C."/>
            <person name="Kuske C.R."/>
            <person name="Schmutz J."/>
            <person name="Larimer F."/>
            <person name="Land M."/>
            <person name="Hauser L."/>
            <person name="Kyrpides N."/>
            <person name="Kim E."/>
            <person name="Zhao J.-S."/>
            <person name="Richardson P."/>
        </authorList>
    </citation>
    <scope>NUCLEOTIDE SEQUENCE [LARGE SCALE GENOMIC DNA]</scope>
    <source>
        <strain>HAW-EB4</strain>
    </source>
</reference>
<protein>
    <recommendedName>
        <fullName evidence="1">Glycerol-3-phosphate dehydrogenase [NAD(P)+]</fullName>
        <ecNumber evidence="1">1.1.1.94</ecNumber>
    </recommendedName>
    <alternativeName>
        <fullName evidence="1">NAD(P)(+)-dependent glycerol-3-phosphate dehydrogenase</fullName>
    </alternativeName>
    <alternativeName>
        <fullName evidence="1">NAD(P)H-dependent dihydroxyacetone-phosphate reductase</fullName>
    </alternativeName>
</protein>
<evidence type="ECO:0000255" key="1">
    <source>
        <dbReference type="HAMAP-Rule" id="MF_00394"/>
    </source>
</evidence>
<proteinExistence type="inferred from homology"/>
<sequence>MKNTADITVLGAGSYGTALAISLASNGHRTMLWGHEPEHIENLKNDKSNEAFLPGIPLPDLLIPEADLATALAASNNVLVVVPSHVFGLVLSQAKPLLRKDSRIVWATKGLEPETGRLIQDVAREVLGDEYPLAVLSGPTFAKELAAGMPTAISIAGTDPQFTKDLVELLHSPKRLRVYANDDFIGLQLGGAVKNVIAIGAGLSDGIGFGANARTALITRGLVELTRLGEAMGAQASTFMGMAGLGDLVLTCTDNQSRNRRFGLALGKGSDVEAAQEEIGQVVEGYRNTKEVYTLAKRLGVEMPITEQVYQVLYKGKSPVDAAKELLSREQKSETSSAE</sequence>
<gene>
    <name evidence="1" type="primary">gpsA</name>
    <name type="ordered locus">Shal_0046</name>
</gene>
<name>GPDA_SHEHH</name>
<organism>
    <name type="scientific">Shewanella halifaxensis (strain HAW-EB4)</name>
    <dbReference type="NCBI Taxonomy" id="458817"/>
    <lineage>
        <taxon>Bacteria</taxon>
        <taxon>Pseudomonadati</taxon>
        <taxon>Pseudomonadota</taxon>
        <taxon>Gammaproteobacteria</taxon>
        <taxon>Alteromonadales</taxon>
        <taxon>Shewanellaceae</taxon>
        <taxon>Shewanella</taxon>
    </lineage>
</organism>
<dbReference type="EC" id="1.1.1.94" evidence="1"/>
<dbReference type="EMBL" id="CP000931">
    <property type="protein sequence ID" value="ABZ74622.1"/>
    <property type="molecule type" value="Genomic_DNA"/>
</dbReference>
<dbReference type="RefSeq" id="WP_012275180.1">
    <property type="nucleotide sequence ID" value="NC_010334.1"/>
</dbReference>
<dbReference type="SMR" id="B0TLE9"/>
<dbReference type="STRING" id="458817.Shal_0046"/>
<dbReference type="KEGG" id="shl:Shal_0046"/>
<dbReference type="eggNOG" id="COG0240">
    <property type="taxonomic scope" value="Bacteria"/>
</dbReference>
<dbReference type="HOGENOM" id="CLU_033449_0_2_6"/>
<dbReference type="OrthoDB" id="9812273at2"/>
<dbReference type="UniPathway" id="UPA00940"/>
<dbReference type="Proteomes" id="UP000001317">
    <property type="component" value="Chromosome"/>
</dbReference>
<dbReference type="GO" id="GO:0005829">
    <property type="term" value="C:cytosol"/>
    <property type="evidence" value="ECO:0007669"/>
    <property type="project" value="TreeGrafter"/>
</dbReference>
<dbReference type="GO" id="GO:0047952">
    <property type="term" value="F:glycerol-3-phosphate dehydrogenase [NAD(P)+] activity"/>
    <property type="evidence" value="ECO:0007669"/>
    <property type="project" value="UniProtKB-UniRule"/>
</dbReference>
<dbReference type="GO" id="GO:0051287">
    <property type="term" value="F:NAD binding"/>
    <property type="evidence" value="ECO:0007669"/>
    <property type="project" value="InterPro"/>
</dbReference>
<dbReference type="GO" id="GO:0005975">
    <property type="term" value="P:carbohydrate metabolic process"/>
    <property type="evidence" value="ECO:0007669"/>
    <property type="project" value="InterPro"/>
</dbReference>
<dbReference type="GO" id="GO:0046167">
    <property type="term" value="P:glycerol-3-phosphate biosynthetic process"/>
    <property type="evidence" value="ECO:0007669"/>
    <property type="project" value="UniProtKB-UniRule"/>
</dbReference>
<dbReference type="GO" id="GO:0046168">
    <property type="term" value="P:glycerol-3-phosphate catabolic process"/>
    <property type="evidence" value="ECO:0007669"/>
    <property type="project" value="InterPro"/>
</dbReference>
<dbReference type="GO" id="GO:0046474">
    <property type="term" value="P:glycerophospholipid biosynthetic process"/>
    <property type="evidence" value="ECO:0007669"/>
    <property type="project" value="TreeGrafter"/>
</dbReference>
<dbReference type="FunFam" id="1.10.1040.10:FF:000001">
    <property type="entry name" value="Glycerol-3-phosphate dehydrogenase [NAD(P)+]"/>
    <property type="match status" value="1"/>
</dbReference>
<dbReference type="FunFam" id="3.40.50.720:FF:000019">
    <property type="entry name" value="Glycerol-3-phosphate dehydrogenase [NAD(P)+]"/>
    <property type="match status" value="1"/>
</dbReference>
<dbReference type="Gene3D" id="1.10.1040.10">
    <property type="entry name" value="N-(1-d-carboxylethyl)-l-norvaline Dehydrogenase, domain 2"/>
    <property type="match status" value="1"/>
</dbReference>
<dbReference type="Gene3D" id="3.40.50.720">
    <property type="entry name" value="NAD(P)-binding Rossmann-like Domain"/>
    <property type="match status" value="1"/>
</dbReference>
<dbReference type="HAMAP" id="MF_00394">
    <property type="entry name" value="NAD_Glyc3P_dehydrog"/>
    <property type="match status" value="1"/>
</dbReference>
<dbReference type="InterPro" id="IPR008927">
    <property type="entry name" value="6-PGluconate_DH-like_C_sf"/>
</dbReference>
<dbReference type="InterPro" id="IPR013328">
    <property type="entry name" value="6PGD_dom2"/>
</dbReference>
<dbReference type="InterPro" id="IPR006168">
    <property type="entry name" value="G3P_DH_NAD-dep"/>
</dbReference>
<dbReference type="InterPro" id="IPR006109">
    <property type="entry name" value="G3P_DH_NAD-dep_C"/>
</dbReference>
<dbReference type="InterPro" id="IPR011128">
    <property type="entry name" value="G3P_DH_NAD-dep_N"/>
</dbReference>
<dbReference type="InterPro" id="IPR036291">
    <property type="entry name" value="NAD(P)-bd_dom_sf"/>
</dbReference>
<dbReference type="NCBIfam" id="NF000939">
    <property type="entry name" value="PRK00094.1-1"/>
    <property type="match status" value="1"/>
</dbReference>
<dbReference type="NCBIfam" id="NF000940">
    <property type="entry name" value="PRK00094.1-2"/>
    <property type="match status" value="1"/>
</dbReference>
<dbReference type="NCBIfam" id="NF000942">
    <property type="entry name" value="PRK00094.1-4"/>
    <property type="match status" value="1"/>
</dbReference>
<dbReference type="PANTHER" id="PTHR11728">
    <property type="entry name" value="GLYCEROL-3-PHOSPHATE DEHYDROGENASE"/>
    <property type="match status" value="1"/>
</dbReference>
<dbReference type="PANTHER" id="PTHR11728:SF1">
    <property type="entry name" value="GLYCEROL-3-PHOSPHATE DEHYDROGENASE [NAD(+)] 2, CHLOROPLASTIC"/>
    <property type="match status" value="1"/>
</dbReference>
<dbReference type="Pfam" id="PF07479">
    <property type="entry name" value="NAD_Gly3P_dh_C"/>
    <property type="match status" value="1"/>
</dbReference>
<dbReference type="Pfam" id="PF01210">
    <property type="entry name" value="NAD_Gly3P_dh_N"/>
    <property type="match status" value="1"/>
</dbReference>
<dbReference type="PIRSF" id="PIRSF000114">
    <property type="entry name" value="Glycerol-3-P_dh"/>
    <property type="match status" value="1"/>
</dbReference>
<dbReference type="PRINTS" id="PR00077">
    <property type="entry name" value="GPDHDRGNASE"/>
</dbReference>
<dbReference type="SUPFAM" id="SSF48179">
    <property type="entry name" value="6-phosphogluconate dehydrogenase C-terminal domain-like"/>
    <property type="match status" value="1"/>
</dbReference>
<dbReference type="SUPFAM" id="SSF51735">
    <property type="entry name" value="NAD(P)-binding Rossmann-fold domains"/>
    <property type="match status" value="1"/>
</dbReference>
<dbReference type="PROSITE" id="PS00957">
    <property type="entry name" value="NAD_G3PDH"/>
    <property type="match status" value="1"/>
</dbReference>